<gene>
    <name type="primary">Sdc3</name>
    <name type="synonym">Kiaa0468</name>
</gene>
<keyword id="KW-1003">Cell membrane</keyword>
<keyword id="KW-0325">Glycoprotein</keyword>
<keyword id="KW-0357">Heparan sulfate</keyword>
<keyword id="KW-0472">Membrane</keyword>
<keyword id="KW-0597">Phosphoprotein</keyword>
<keyword id="KW-0654">Proteoglycan</keyword>
<keyword id="KW-1185">Reference proteome</keyword>
<keyword id="KW-0732">Signal</keyword>
<keyword id="KW-0812">Transmembrane</keyword>
<keyword id="KW-1133">Transmembrane helix</keyword>
<comment type="function">
    <text evidence="1">Cell surface proteoglycan that may bear heparan sulfate. May have a role in the organization of cell shape by affecting the actin cytoskeleton, possibly by transferring signals from the cell surface in a sugar-dependent mechanism (By similarity).</text>
</comment>
<comment type="subunit">
    <text evidence="1 2 3 6">Interacts with TIAM1 (By similarity). Interacts with PTN (via heparan sulfate chains); this interaction mediates the neurite outgrowth-promoting signal from PTN to the cytoskeleton of growing neurites; this interaction mediates osteoblast recruitment (By similarity). Interacts with MDK; this interaction induces SDC3 clustering; this interaction induces neuronal cell adhesion and neurite outgrowth (PubMed:12084985).</text>
</comment>
<comment type="subcellular location">
    <subcellularLocation>
        <location>Cell membrane</location>
        <topology>Single-pass type I membrane protein</topology>
    </subcellularLocation>
</comment>
<comment type="PTM">
    <text evidence="7">O-glycosylated within the Thr/Ser-rich region which could interact with lectin domains on other molecules.</text>
</comment>
<comment type="similarity">
    <text evidence="7">Belongs to the syndecan proteoglycan family.</text>
</comment>
<name>SDC3_MOUSE</name>
<evidence type="ECO:0000250" key="1"/>
<evidence type="ECO:0000250" key="2">
    <source>
        <dbReference type="UniProtKB" id="O75056"/>
    </source>
</evidence>
<evidence type="ECO:0000250" key="3">
    <source>
        <dbReference type="UniProtKB" id="P33671"/>
    </source>
</evidence>
<evidence type="ECO:0000255" key="4"/>
<evidence type="ECO:0000256" key="5">
    <source>
        <dbReference type="SAM" id="MobiDB-lite"/>
    </source>
</evidence>
<evidence type="ECO:0000269" key="6">
    <source>
    </source>
</evidence>
<evidence type="ECO:0000305" key="7"/>
<protein>
    <recommendedName>
        <fullName>Syndecan-3</fullName>
        <shortName>SYND3</shortName>
    </recommendedName>
</protein>
<proteinExistence type="evidence at protein level"/>
<reference key="1">
    <citation type="submission" date="1996-03" db="EMBL/GenBank/DDBJ databases">
        <title>Cloning of rat and mouse syndecan-3 cDNAs.</title>
        <authorList>
            <person name="Kung C.E."/>
            <person name="Deuel T.F."/>
        </authorList>
    </citation>
    <scope>NUCLEOTIDE SEQUENCE [MRNA]</scope>
    <source>
        <strain>C57BL/6 X CBA</strain>
    </source>
</reference>
<reference key="2">
    <citation type="journal article" date="2003" name="DNA Res.">
        <title>Prediction of the coding sequences of mouse homologues of KIAA gene: III. The complete nucleotide sequences of 500 mouse KIAA-homologous cDNAs identified by screening of terminal sequences of cDNA clones randomly sampled from size-fractionated libraries.</title>
        <authorList>
            <person name="Okazaki N."/>
            <person name="Kikuno R."/>
            <person name="Ohara R."/>
            <person name="Inamoto S."/>
            <person name="Koseki H."/>
            <person name="Hiraoka S."/>
            <person name="Saga Y."/>
            <person name="Nagase T."/>
            <person name="Ohara O."/>
            <person name="Koga H."/>
        </authorList>
    </citation>
    <scope>NUCLEOTIDE SEQUENCE [LARGE SCALE MRNA]</scope>
    <source>
        <tissue>Embryonic tail</tissue>
    </source>
</reference>
<reference key="3">
    <citation type="journal article" date="2005" name="Science">
        <title>The transcriptional landscape of the mammalian genome.</title>
        <authorList>
            <person name="Carninci P."/>
            <person name="Kasukawa T."/>
            <person name="Katayama S."/>
            <person name="Gough J."/>
            <person name="Frith M.C."/>
            <person name="Maeda N."/>
            <person name="Oyama R."/>
            <person name="Ravasi T."/>
            <person name="Lenhard B."/>
            <person name="Wells C."/>
            <person name="Kodzius R."/>
            <person name="Shimokawa K."/>
            <person name="Bajic V.B."/>
            <person name="Brenner S.E."/>
            <person name="Batalov S."/>
            <person name="Forrest A.R."/>
            <person name="Zavolan M."/>
            <person name="Davis M.J."/>
            <person name="Wilming L.G."/>
            <person name="Aidinis V."/>
            <person name="Allen J.E."/>
            <person name="Ambesi-Impiombato A."/>
            <person name="Apweiler R."/>
            <person name="Aturaliya R.N."/>
            <person name="Bailey T.L."/>
            <person name="Bansal M."/>
            <person name="Baxter L."/>
            <person name="Beisel K.W."/>
            <person name="Bersano T."/>
            <person name="Bono H."/>
            <person name="Chalk A.M."/>
            <person name="Chiu K.P."/>
            <person name="Choudhary V."/>
            <person name="Christoffels A."/>
            <person name="Clutterbuck D.R."/>
            <person name="Crowe M.L."/>
            <person name="Dalla E."/>
            <person name="Dalrymple B.P."/>
            <person name="de Bono B."/>
            <person name="Della Gatta G."/>
            <person name="di Bernardo D."/>
            <person name="Down T."/>
            <person name="Engstrom P."/>
            <person name="Fagiolini M."/>
            <person name="Faulkner G."/>
            <person name="Fletcher C.F."/>
            <person name="Fukushima T."/>
            <person name="Furuno M."/>
            <person name="Futaki S."/>
            <person name="Gariboldi M."/>
            <person name="Georgii-Hemming P."/>
            <person name="Gingeras T.R."/>
            <person name="Gojobori T."/>
            <person name="Green R.E."/>
            <person name="Gustincich S."/>
            <person name="Harbers M."/>
            <person name="Hayashi Y."/>
            <person name="Hensch T.K."/>
            <person name="Hirokawa N."/>
            <person name="Hill D."/>
            <person name="Huminiecki L."/>
            <person name="Iacono M."/>
            <person name="Ikeo K."/>
            <person name="Iwama A."/>
            <person name="Ishikawa T."/>
            <person name="Jakt M."/>
            <person name="Kanapin A."/>
            <person name="Katoh M."/>
            <person name="Kawasawa Y."/>
            <person name="Kelso J."/>
            <person name="Kitamura H."/>
            <person name="Kitano H."/>
            <person name="Kollias G."/>
            <person name="Krishnan S.P."/>
            <person name="Kruger A."/>
            <person name="Kummerfeld S.K."/>
            <person name="Kurochkin I.V."/>
            <person name="Lareau L.F."/>
            <person name="Lazarevic D."/>
            <person name="Lipovich L."/>
            <person name="Liu J."/>
            <person name="Liuni S."/>
            <person name="McWilliam S."/>
            <person name="Madan Babu M."/>
            <person name="Madera M."/>
            <person name="Marchionni L."/>
            <person name="Matsuda H."/>
            <person name="Matsuzawa S."/>
            <person name="Miki H."/>
            <person name="Mignone F."/>
            <person name="Miyake S."/>
            <person name="Morris K."/>
            <person name="Mottagui-Tabar S."/>
            <person name="Mulder N."/>
            <person name="Nakano N."/>
            <person name="Nakauchi H."/>
            <person name="Ng P."/>
            <person name="Nilsson R."/>
            <person name="Nishiguchi S."/>
            <person name="Nishikawa S."/>
            <person name="Nori F."/>
            <person name="Ohara O."/>
            <person name="Okazaki Y."/>
            <person name="Orlando V."/>
            <person name="Pang K.C."/>
            <person name="Pavan W.J."/>
            <person name="Pavesi G."/>
            <person name="Pesole G."/>
            <person name="Petrovsky N."/>
            <person name="Piazza S."/>
            <person name="Reed J."/>
            <person name="Reid J.F."/>
            <person name="Ring B.Z."/>
            <person name="Ringwald M."/>
            <person name="Rost B."/>
            <person name="Ruan Y."/>
            <person name="Salzberg S.L."/>
            <person name="Sandelin A."/>
            <person name="Schneider C."/>
            <person name="Schoenbach C."/>
            <person name="Sekiguchi K."/>
            <person name="Semple C.A."/>
            <person name="Seno S."/>
            <person name="Sessa L."/>
            <person name="Sheng Y."/>
            <person name="Shibata Y."/>
            <person name="Shimada H."/>
            <person name="Shimada K."/>
            <person name="Silva D."/>
            <person name="Sinclair B."/>
            <person name="Sperling S."/>
            <person name="Stupka E."/>
            <person name="Sugiura K."/>
            <person name="Sultana R."/>
            <person name="Takenaka Y."/>
            <person name="Taki K."/>
            <person name="Tammoja K."/>
            <person name="Tan S.L."/>
            <person name="Tang S."/>
            <person name="Taylor M.S."/>
            <person name="Tegner J."/>
            <person name="Teichmann S.A."/>
            <person name="Ueda H.R."/>
            <person name="van Nimwegen E."/>
            <person name="Verardo R."/>
            <person name="Wei C.L."/>
            <person name="Yagi K."/>
            <person name="Yamanishi H."/>
            <person name="Zabarovsky E."/>
            <person name="Zhu S."/>
            <person name="Zimmer A."/>
            <person name="Hide W."/>
            <person name="Bult C."/>
            <person name="Grimmond S.M."/>
            <person name="Teasdale R.D."/>
            <person name="Liu E.T."/>
            <person name="Brusic V."/>
            <person name="Quackenbush J."/>
            <person name="Wahlestedt C."/>
            <person name="Mattick J.S."/>
            <person name="Hume D.A."/>
            <person name="Kai C."/>
            <person name="Sasaki D."/>
            <person name="Tomaru Y."/>
            <person name="Fukuda S."/>
            <person name="Kanamori-Katayama M."/>
            <person name="Suzuki M."/>
            <person name="Aoki J."/>
            <person name="Arakawa T."/>
            <person name="Iida J."/>
            <person name="Imamura K."/>
            <person name="Itoh M."/>
            <person name="Kato T."/>
            <person name="Kawaji H."/>
            <person name="Kawagashira N."/>
            <person name="Kawashima T."/>
            <person name="Kojima M."/>
            <person name="Kondo S."/>
            <person name="Konno H."/>
            <person name="Nakano K."/>
            <person name="Ninomiya N."/>
            <person name="Nishio T."/>
            <person name="Okada M."/>
            <person name="Plessy C."/>
            <person name="Shibata K."/>
            <person name="Shiraki T."/>
            <person name="Suzuki S."/>
            <person name="Tagami M."/>
            <person name="Waki K."/>
            <person name="Watahiki A."/>
            <person name="Okamura-Oho Y."/>
            <person name="Suzuki H."/>
            <person name="Kawai J."/>
            <person name="Hayashizaki Y."/>
        </authorList>
    </citation>
    <scope>NUCLEOTIDE SEQUENCE [LARGE SCALE MRNA]</scope>
    <source>
        <strain>C57BL/6J</strain>
        <strain>NOD</strain>
        <tissue>Bone marrow</tissue>
    </source>
</reference>
<reference key="4">
    <citation type="journal article" date="2004" name="Genome Res.">
        <title>The status, quality, and expansion of the NIH full-length cDNA project: the Mammalian Gene Collection (MGC).</title>
        <authorList>
            <consortium name="The MGC Project Team"/>
        </authorList>
    </citation>
    <scope>NUCLEOTIDE SEQUENCE [LARGE SCALE MRNA]</scope>
    <source>
        <strain>C57BL/6J</strain>
        <tissue>Brain</tissue>
    </source>
</reference>
<reference key="5">
    <citation type="journal article" date="2001" name="Glycoconj. J.">
        <title>Glypican-2 binds to midkine: the role of glypican-2 in neuronal cell adhesion and neurite outgrowth.</title>
        <authorList>
            <person name="Kurosawa N."/>
            <person name="Chen G.Y."/>
            <person name="Kadomatsu K."/>
            <person name="Ikematsu S."/>
            <person name="Sakuma S."/>
            <person name="Muramatsu T."/>
        </authorList>
    </citation>
    <scope>INTERACTION WITH MDK</scope>
</reference>
<reference key="6">
    <citation type="journal article" date="2010" name="Cell">
        <title>A tissue-specific atlas of mouse protein phosphorylation and expression.</title>
        <authorList>
            <person name="Huttlin E.L."/>
            <person name="Jedrychowski M.P."/>
            <person name="Elias J.E."/>
            <person name="Goswami T."/>
            <person name="Rad R."/>
            <person name="Beausoleil S.A."/>
            <person name="Villen J."/>
            <person name="Haas W."/>
            <person name="Sowa M.E."/>
            <person name="Gygi S.P."/>
        </authorList>
    </citation>
    <scope>IDENTIFICATION BY MASS SPECTROMETRY [LARGE SCALE ANALYSIS]</scope>
    <source>
        <tissue>Brain</tissue>
    </source>
</reference>
<organism>
    <name type="scientific">Mus musculus</name>
    <name type="common">Mouse</name>
    <dbReference type="NCBI Taxonomy" id="10090"/>
    <lineage>
        <taxon>Eukaryota</taxon>
        <taxon>Metazoa</taxon>
        <taxon>Chordata</taxon>
        <taxon>Craniata</taxon>
        <taxon>Vertebrata</taxon>
        <taxon>Euteleostomi</taxon>
        <taxon>Mammalia</taxon>
        <taxon>Eutheria</taxon>
        <taxon>Euarchontoglires</taxon>
        <taxon>Glires</taxon>
        <taxon>Rodentia</taxon>
        <taxon>Myomorpha</taxon>
        <taxon>Muroidea</taxon>
        <taxon>Muridae</taxon>
        <taxon>Murinae</taxon>
        <taxon>Mus</taxon>
        <taxon>Mus</taxon>
    </lineage>
</organism>
<accession>Q64519</accession>
<accession>Q3UDD9</accession>
<accession>Q6ZQA4</accession>
<accession>Q7TQD4</accession>
<feature type="signal peptide" evidence="4">
    <location>
        <begin position="1"/>
        <end position="44"/>
    </location>
</feature>
<feature type="chain" id="PRO_0000033508" description="Syndecan-3">
    <location>
        <begin position="45"/>
        <end position="442"/>
    </location>
</feature>
<feature type="topological domain" description="Extracellular" evidence="4">
    <location>
        <begin position="45"/>
        <end position="387"/>
    </location>
</feature>
<feature type="transmembrane region" description="Helical" evidence="4">
    <location>
        <begin position="388"/>
        <end position="408"/>
    </location>
</feature>
<feature type="topological domain" description="Cytoplasmic" evidence="4">
    <location>
        <begin position="409"/>
        <end position="442"/>
    </location>
</feature>
<feature type="region of interest" description="Disordered" evidence="5">
    <location>
        <begin position="1"/>
        <end position="25"/>
    </location>
</feature>
<feature type="region of interest" description="Disordered" evidence="5">
    <location>
        <begin position="47"/>
        <end position="80"/>
    </location>
</feature>
<feature type="region of interest" description="Disordered" evidence="5">
    <location>
        <begin position="152"/>
        <end position="199"/>
    </location>
</feature>
<feature type="region of interest" description="Disordered" evidence="5">
    <location>
        <begin position="253"/>
        <end position="293"/>
    </location>
</feature>
<feature type="region of interest" description="Disordered" evidence="5">
    <location>
        <begin position="305"/>
        <end position="327"/>
    </location>
</feature>
<feature type="region of interest" description="Disordered" evidence="5">
    <location>
        <begin position="419"/>
        <end position="442"/>
    </location>
</feature>
<feature type="compositionally biased region" description="Basic and acidic residues" evidence="5">
    <location>
        <begin position="48"/>
        <end position="58"/>
    </location>
</feature>
<feature type="compositionally biased region" description="Acidic residues" evidence="5">
    <location>
        <begin position="61"/>
        <end position="75"/>
    </location>
</feature>
<feature type="compositionally biased region" description="Low complexity" evidence="5">
    <location>
        <begin position="157"/>
        <end position="199"/>
    </location>
</feature>
<feature type="compositionally biased region" description="Low complexity" evidence="5">
    <location>
        <begin position="276"/>
        <end position="287"/>
    </location>
</feature>
<feature type="compositionally biased region" description="Basic and acidic residues" evidence="5">
    <location>
        <begin position="433"/>
        <end position="442"/>
    </location>
</feature>
<feature type="site" description="Cleavage of ectodomain" evidence="4">
    <location>
        <begin position="383"/>
        <end position="384"/>
    </location>
</feature>
<feature type="modified residue" description="Phosphotyrosine" evidence="2">
    <location>
        <position position="409"/>
    </location>
</feature>
<feature type="modified residue" description="Phosphotyrosine" evidence="2">
    <location>
        <position position="419"/>
    </location>
</feature>
<feature type="modified residue" description="Phosphotyrosine" evidence="2">
    <location>
        <position position="431"/>
    </location>
</feature>
<feature type="modified residue" description="Phosphotyrosine" evidence="2">
    <location>
        <position position="441"/>
    </location>
</feature>
<feature type="glycosylation site" description="O-linked (Xyl...) (glycosaminoglycan) serine" evidence="4">
    <location>
        <position position="78"/>
    </location>
</feature>
<feature type="glycosylation site" description="O-linked (Xyl...) (glycosaminoglycan) serine" evidence="4">
    <location>
        <position position="80"/>
    </location>
</feature>
<feature type="glycosylation site" description="O-linked (Xyl...) (glycosaminoglycan) serine" evidence="4">
    <location>
        <position position="82"/>
    </location>
</feature>
<feature type="glycosylation site" description="O-linked (Xyl...) (glycosaminoglycan) serine" evidence="4">
    <location>
        <position position="89"/>
    </location>
</feature>
<feature type="glycosylation site" description="O-linked (GalNAc) threonine; by GALNT13" evidence="2">
    <location>
        <position position="107"/>
    </location>
</feature>
<feature type="glycosylation site" description="O-linked (GalNAc) serine; by GALNT13" evidence="2">
    <location>
        <position position="161"/>
    </location>
</feature>
<feature type="glycosylation site" description="O-linked (GalNAc) threonine; by GALNT13" evidence="2">
    <location>
        <position position="162"/>
    </location>
</feature>
<feature type="glycosylation site" description="O-linked (GalNAc) threonine; by GALNT13" evidence="2">
    <location>
        <position position="163"/>
    </location>
</feature>
<feature type="glycosylation site" description="O-linked (GalNAc) threonine; by GALNT13" evidence="2">
    <location>
        <position position="170"/>
    </location>
</feature>
<feature type="glycosylation site" description="O-linked (GalNAc) threonine; by GALNT13" evidence="2">
    <location>
        <position position="172"/>
    </location>
</feature>
<feature type="glycosylation site" description="O-linked (Xyl...) (glycosaminoglycan) serine" evidence="4">
    <location>
        <position position="315"/>
    </location>
</feature>
<feature type="glycosylation site" description="O-linked (Xyl...) (glycosaminoglycan) serine" evidence="4">
    <location>
        <position position="367"/>
    </location>
</feature>
<feature type="sequence conflict" description="In Ref. 1; AAB03283." evidence="7" ref="1">
    <original>S</original>
    <variation>R</variation>
    <location>
        <position position="133"/>
    </location>
</feature>
<feature type="sequence conflict" description="In Ref. 1; AAB03283." evidence="7" ref="1">
    <original>T</original>
    <variation>K</variation>
    <location>
        <position position="147"/>
    </location>
</feature>
<feature type="sequence conflict" description="In Ref. 1; AAB03283." evidence="7" ref="1">
    <original>RA</original>
    <variation>QS</variation>
    <location>
        <begin position="258"/>
        <end position="259"/>
    </location>
</feature>
<feature type="sequence conflict" description="In Ref. 1; AAB03283." evidence="7" ref="1">
    <original>V</original>
    <variation>I</variation>
    <location>
        <position position="264"/>
    </location>
</feature>
<feature type="sequence conflict" description="In Ref. 1; AAB03283." evidence="7" ref="1">
    <original>D</original>
    <variation>E</variation>
    <location>
        <position position="270"/>
    </location>
</feature>
<feature type="sequence conflict" description="In Ref. 1; AAB03283." evidence="7" ref="1">
    <original>M</original>
    <variation>V</variation>
    <location>
        <position position="289"/>
    </location>
</feature>
<feature type="sequence conflict" description="In Ref. 1; AAB03283." evidence="7" ref="1">
    <original>I</original>
    <variation>T</variation>
    <location>
        <position position="302"/>
    </location>
</feature>
<feature type="sequence conflict" description="In Ref. 1; AAB03283." evidence="7" ref="1">
    <original>P</original>
    <variation>L</variation>
    <location>
        <position position="358"/>
    </location>
</feature>
<feature type="sequence conflict" description="In Ref. 1; AAB03283." evidence="7" ref="1">
    <original>P</original>
    <variation>L</variation>
    <location>
        <position position="375"/>
    </location>
</feature>
<feature type="sequence conflict" description="In Ref. 4; BAE29322." evidence="7" ref="4">
    <original>V</original>
    <variation>D</variation>
    <location>
        <position position="429"/>
    </location>
</feature>
<sequence length="442" mass="46002">MKPGPPRRGTAQGQRVDTATHAPGARGLLLPPLLLLLLAGRAAGAQRWRNENFERPVDLEGSGDDDSFPDDELDDLYSGSGSGYFEQESGLETAMRFIPDMALAAPTAPAMLPTTVIQPVDTPFEELLSEHPSPEPVTSPPLVTEVTEVVEESSQKATTISTTTSTTAATTTGAPTMATAPATAATTAPSTPEAPPATATVADVRTTGIQGMLPLPLTTAATAKITTPAAPSPPTTVATLDTEAPTPRLVNTATSRPRALPRPVTTQEPDVAERSTLPLGTTAPGPTEMAQTPTPESLLTTIQDEPEVPVSGGPSGDFELQEETTQPDTANEVVAVEGAAAKPSPPLGTLPKGARPGPGLHDNAIDSGSSAAQLPQKSILERKEVLVAVIVGGVVGALFAAFLVTLLIYRMKKKDEGSYTLEEPKQASVTYQKPDKQEEFYA</sequence>
<dbReference type="EMBL" id="U52826">
    <property type="protein sequence ID" value="AAB03283.1"/>
    <property type="molecule type" value="mRNA"/>
</dbReference>
<dbReference type="EMBL" id="AK129153">
    <property type="protein sequence ID" value="BAC97963.1"/>
    <property type="molecule type" value="mRNA"/>
</dbReference>
<dbReference type="EMBL" id="AK150120">
    <property type="protein sequence ID" value="BAE29322.1"/>
    <property type="molecule type" value="mRNA"/>
</dbReference>
<dbReference type="EMBL" id="AK155127">
    <property type="protein sequence ID" value="BAE33064.1"/>
    <property type="molecule type" value="mRNA"/>
</dbReference>
<dbReference type="EMBL" id="BC054795">
    <property type="protein sequence ID" value="AAH54795.1"/>
    <property type="molecule type" value="mRNA"/>
</dbReference>
<dbReference type="EMBL" id="BC062093">
    <property type="protein sequence ID" value="AAH62093.1"/>
    <property type="molecule type" value="mRNA"/>
</dbReference>
<dbReference type="CCDS" id="CCDS38894.1"/>
<dbReference type="RefSeq" id="NP_035650.2">
    <property type="nucleotide sequence ID" value="NM_011520.3"/>
</dbReference>
<dbReference type="SMR" id="Q64519"/>
<dbReference type="FunCoup" id="Q64519">
    <property type="interactions" value="352"/>
</dbReference>
<dbReference type="IntAct" id="Q64519">
    <property type="interactions" value="1"/>
</dbReference>
<dbReference type="STRING" id="10090.ENSMUSP00000065877"/>
<dbReference type="GlyCosmos" id="Q64519">
    <property type="glycosylation" value="12 sites, No reported glycans"/>
</dbReference>
<dbReference type="GlyGen" id="Q64519">
    <property type="glycosylation" value="15 sites, 1 O-linked glycan (1 site)"/>
</dbReference>
<dbReference type="iPTMnet" id="Q64519"/>
<dbReference type="PhosphoSitePlus" id="Q64519"/>
<dbReference type="PaxDb" id="10090-ENSMUSP00000065877"/>
<dbReference type="PeptideAtlas" id="Q64519"/>
<dbReference type="ProteomicsDB" id="256757"/>
<dbReference type="Pumba" id="Q64519"/>
<dbReference type="Antibodypedia" id="1502">
    <property type="antibodies" value="228 antibodies from 32 providers"/>
</dbReference>
<dbReference type="DNASU" id="20970"/>
<dbReference type="Ensembl" id="ENSMUST00000070478.4">
    <property type="protein sequence ID" value="ENSMUSP00000065877.4"/>
    <property type="gene ID" value="ENSMUSG00000025743.15"/>
</dbReference>
<dbReference type="GeneID" id="20970"/>
<dbReference type="KEGG" id="mmu:20970"/>
<dbReference type="UCSC" id="uc008uzr.1">
    <property type="organism name" value="mouse"/>
</dbReference>
<dbReference type="AGR" id="MGI:1349163"/>
<dbReference type="CTD" id="9672"/>
<dbReference type="MGI" id="MGI:1349163">
    <property type="gene designation" value="Sdc3"/>
</dbReference>
<dbReference type="VEuPathDB" id="HostDB:ENSMUSG00000025743"/>
<dbReference type="eggNOG" id="ENOG502QTD2">
    <property type="taxonomic scope" value="Eukaryota"/>
</dbReference>
<dbReference type="GeneTree" id="ENSGT00940000160209"/>
<dbReference type="HOGENOM" id="CLU_047258_0_0_1"/>
<dbReference type="InParanoid" id="Q64519"/>
<dbReference type="OMA" id="EMQPSES"/>
<dbReference type="OrthoDB" id="10044468at2759"/>
<dbReference type="PhylomeDB" id="Q64519"/>
<dbReference type="TreeFam" id="TF320463"/>
<dbReference type="Reactome" id="R-MMU-1971475">
    <property type="pathway name" value="A tetrasaccharide linker sequence is required for GAG synthesis"/>
</dbReference>
<dbReference type="Reactome" id="R-MMU-2022928">
    <property type="pathway name" value="HS-GAG biosynthesis"/>
</dbReference>
<dbReference type="Reactome" id="R-MMU-2024096">
    <property type="pathway name" value="HS-GAG degradation"/>
</dbReference>
<dbReference type="Reactome" id="R-MMU-202733">
    <property type="pathway name" value="Cell surface interactions at the vascular wall"/>
</dbReference>
<dbReference type="Reactome" id="R-MMU-3000170">
    <property type="pathway name" value="Syndecan interactions"/>
</dbReference>
<dbReference type="Reactome" id="R-MMU-975634">
    <property type="pathway name" value="Retinoid metabolism and transport"/>
</dbReference>
<dbReference type="BioGRID-ORCS" id="20970">
    <property type="hits" value="4 hits in 76 CRISPR screens"/>
</dbReference>
<dbReference type="ChiTaRS" id="Sdc3">
    <property type="organism name" value="mouse"/>
</dbReference>
<dbReference type="PRO" id="PR:Q64519"/>
<dbReference type="Proteomes" id="UP000000589">
    <property type="component" value="Chromosome 4"/>
</dbReference>
<dbReference type="RNAct" id="Q64519">
    <property type="molecule type" value="protein"/>
</dbReference>
<dbReference type="Bgee" id="ENSMUSG00000025743">
    <property type="expression patterns" value="Expressed in humerus cartilage element and 242 other cell types or tissues"/>
</dbReference>
<dbReference type="ExpressionAtlas" id="Q64519">
    <property type="expression patterns" value="baseline and differential"/>
</dbReference>
<dbReference type="GO" id="GO:0005796">
    <property type="term" value="C:Golgi lumen"/>
    <property type="evidence" value="ECO:0000304"/>
    <property type="project" value="Reactome"/>
</dbReference>
<dbReference type="GO" id="GO:0016020">
    <property type="term" value="C:membrane"/>
    <property type="evidence" value="ECO:0000250"/>
    <property type="project" value="UniProtKB"/>
</dbReference>
<dbReference type="GO" id="GO:0044393">
    <property type="term" value="C:microspike"/>
    <property type="evidence" value="ECO:0000314"/>
    <property type="project" value="UniProtKB"/>
</dbReference>
<dbReference type="GO" id="GO:0005886">
    <property type="term" value="C:plasma membrane"/>
    <property type="evidence" value="ECO:0000250"/>
    <property type="project" value="UniProtKB"/>
</dbReference>
<dbReference type="GO" id="GO:0042802">
    <property type="term" value="F:identical protein binding"/>
    <property type="evidence" value="ECO:0007669"/>
    <property type="project" value="Ensembl"/>
</dbReference>
<dbReference type="InterPro" id="IPR003585">
    <property type="entry name" value="Neurexin-like"/>
</dbReference>
<dbReference type="InterPro" id="IPR001050">
    <property type="entry name" value="Syndecan"/>
</dbReference>
<dbReference type="InterPro" id="IPR027789">
    <property type="entry name" value="Syndecan/Neurexin_dom"/>
</dbReference>
<dbReference type="InterPro" id="IPR030479">
    <property type="entry name" value="Syndecan_CS"/>
</dbReference>
<dbReference type="PANTHER" id="PTHR10915">
    <property type="entry name" value="SYNDECAN"/>
    <property type="match status" value="1"/>
</dbReference>
<dbReference type="PANTHER" id="PTHR10915:SF7">
    <property type="entry name" value="SYNDECAN-3"/>
    <property type="match status" value="1"/>
</dbReference>
<dbReference type="Pfam" id="PF01034">
    <property type="entry name" value="Syndecan"/>
    <property type="match status" value="1"/>
</dbReference>
<dbReference type="SMART" id="SM00294">
    <property type="entry name" value="4.1m"/>
    <property type="match status" value="1"/>
</dbReference>
<dbReference type="PROSITE" id="PS00964">
    <property type="entry name" value="SYNDECAN"/>
    <property type="match status" value="1"/>
</dbReference>